<accession>Q8U3G4</accession>
<evidence type="ECO:0000255" key="1">
    <source>
        <dbReference type="HAMAP-Rule" id="MF_01886"/>
    </source>
</evidence>
<evidence type="ECO:0000305" key="2">
    <source>
    </source>
</evidence>
<evidence type="ECO:0000312" key="3">
    <source>
        <dbReference type="EMBL" id="AAL80628.1"/>
    </source>
</evidence>
<name>TMCA_PYRFU</name>
<gene>
    <name evidence="1" type="primary">tmcA</name>
    <name evidence="3" type="ordered locus">PF0504</name>
</gene>
<protein>
    <recommendedName>
        <fullName evidence="1">tRNA(Met) cytidine acetyltransferase TmcA</fullName>
        <ecNumber evidence="1">2.3.1.193</ecNumber>
    </recommendedName>
</protein>
<keyword id="KW-0012">Acyltransferase</keyword>
<keyword id="KW-0067">ATP-binding</keyword>
<keyword id="KW-0963">Cytoplasm</keyword>
<keyword id="KW-0347">Helicase</keyword>
<keyword id="KW-0378">Hydrolase</keyword>
<keyword id="KW-0547">Nucleotide-binding</keyword>
<keyword id="KW-1185">Reference proteome</keyword>
<keyword id="KW-0694">RNA-binding</keyword>
<keyword id="KW-0698">rRNA processing</keyword>
<keyword id="KW-0699">rRNA-binding</keyword>
<keyword id="KW-0808">Transferase</keyword>
<keyword id="KW-0819">tRNA processing</keyword>
<keyword id="KW-0820">tRNA-binding</keyword>
<dbReference type="EC" id="2.3.1.193" evidence="1"/>
<dbReference type="EMBL" id="AE009950">
    <property type="protein sequence ID" value="AAL80628.1"/>
    <property type="molecule type" value="Genomic_DNA"/>
</dbReference>
<dbReference type="RefSeq" id="WP_011011621.1">
    <property type="nucleotide sequence ID" value="NZ_CP023154.1"/>
</dbReference>
<dbReference type="STRING" id="186497.PF0504"/>
<dbReference type="PaxDb" id="186497-PF0504"/>
<dbReference type="DNASU" id="1468345"/>
<dbReference type="KEGG" id="pfu:PF0504"/>
<dbReference type="PATRIC" id="fig|186497.12.peg.527"/>
<dbReference type="eggNOG" id="arCOG01951">
    <property type="taxonomic scope" value="Archaea"/>
</dbReference>
<dbReference type="HOGENOM" id="CLU_004652_1_0_2"/>
<dbReference type="OrthoDB" id="312894at2157"/>
<dbReference type="PhylomeDB" id="Q8U3G4"/>
<dbReference type="Proteomes" id="UP000001013">
    <property type="component" value="Chromosome"/>
</dbReference>
<dbReference type="GO" id="GO:0005737">
    <property type="term" value="C:cytoplasm"/>
    <property type="evidence" value="ECO:0007669"/>
    <property type="project" value="UniProtKB-SubCell"/>
</dbReference>
<dbReference type="GO" id="GO:1990883">
    <property type="term" value="F:18S rRNA cytidine N-acetyltransferase activity"/>
    <property type="evidence" value="ECO:0007669"/>
    <property type="project" value="TreeGrafter"/>
</dbReference>
<dbReference type="GO" id="GO:0005524">
    <property type="term" value="F:ATP binding"/>
    <property type="evidence" value="ECO:0007669"/>
    <property type="project" value="UniProtKB-UniRule"/>
</dbReference>
<dbReference type="GO" id="GO:0004386">
    <property type="term" value="F:helicase activity"/>
    <property type="evidence" value="ECO:0007669"/>
    <property type="project" value="UniProtKB-KW"/>
</dbReference>
<dbReference type="GO" id="GO:0016787">
    <property type="term" value="F:hydrolase activity"/>
    <property type="evidence" value="ECO:0007669"/>
    <property type="project" value="UniProtKB-KW"/>
</dbReference>
<dbReference type="GO" id="GO:0106162">
    <property type="term" value="F:mRNA N-acetyltransferase activity"/>
    <property type="evidence" value="ECO:0007669"/>
    <property type="project" value="RHEA"/>
</dbReference>
<dbReference type="GO" id="GO:0019843">
    <property type="term" value="F:rRNA binding"/>
    <property type="evidence" value="ECO:0007669"/>
    <property type="project" value="UniProtKB-KW"/>
</dbReference>
<dbReference type="GO" id="GO:0000049">
    <property type="term" value="F:tRNA binding"/>
    <property type="evidence" value="ECO:0007669"/>
    <property type="project" value="UniProtKB-UniRule"/>
</dbReference>
<dbReference type="GO" id="GO:0051392">
    <property type="term" value="F:tRNA N4-acetyltransferase activity"/>
    <property type="evidence" value="ECO:0007669"/>
    <property type="project" value="UniProtKB-UniRule"/>
</dbReference>
<dbReference type="GO" id="GO:1904812">
    <property type="term" value="P:rRNA acetylation involved in maturation of SSU-rRNA"/>
    <property type="evidence" value="ECO:0007669"/>
    <property type="project" value="TreeGrafter"/>
</dbReference>
<dbReference type="GO" id="GO:0051391">
    <property type="term" value="P:tRNA acetylation"/>
    <property type="evidence" value="ECO:0007669"/>
    <property type="project" value="UniProtKB-UniRule"/>
</dbReference>
<dbReference type="GO" id="GO:0002101">
    <property type="term" value="P:tRNA wobble cytosine modification"/>
    <property type="evidence" value="ECO:0007669"/>
    <property type="project" value="UniProtKB-UniRule"/>
</dbReference>
<dbReference type="FunFam" id="3.40.50.300:FF:002218">
    <property type="entry name" value="tRNA(Met) cytidine acetyltransferase TmcA"/>
    <property type="match status" value="1"/>
</dbReference>
<dbReference type="FunFam" id="3.40.630.30:FF:000140">
    <property type="entry name" value="tRNA(Met) cytidine acetyltransferase TmcA"/>
    <property type="match status" value="1"/>
</dbReference>
<dbReference type="Gene3D" id="3.40.50.11040">
    <property type="match status" value="1"/>
</dbReference>
<dbReference type="Gene3D" id="3.40.630.30">
    <property type="match status" value="1"/>
</dbReference>
<dbReference type="Gene3D" id="3.40.50.300">
    <property type="entry name" value="P-loop containing nucleotide triphosphate hydrolases"/>
    <property type="match status" value="1"/>
</dbReference>
<dbReference type="HAMAP" id="MF_01886">
    <property type="entry name" value="tRNA_acetyltr_TmcA"/>
    <property type="match status" value="1"/>
</dbReference>
<dbReference type="InterPro" id="IPR016181">
    <property type="entry name" value="Acyl_CoA_acyltransferase"/>
</dbReference>
<dbReference type="InterPro" id="IPR000182">
    <property type="entry name" value="GNAT_dom"/>
</dbReference>
<dbReference type="InterPro" id="IPR007807">
    <property type="entry name" value="NAT10/TcmA_helicase"/>
</dbReference>
<dbReference type="InterPro" id="IPR027417">
    <property type="entry name" value="P-loop_NTPase"/>
</dbReference>
<dbReference type="InterPro" id="IPR032672">
    <property type="entry name" value="TmcA/NAT10/Kre33"/>
</dbReference>
<dbReference type="InterPro" id="IPR013562">
    <property type="entry name" value="TmcA_N"/>
</dbReference>
<dbReference type="InterPro" id="IPR024914">
    <property type="entry name" value="tRNA_acetyltr_TmcA"/>
</dbReference>
<dbReference type="PANTHER" id="PTHR10925">
    <property type="entry name" value="N-ACETYLTRANSFERASE 10"/>
    <property type="match status" value="1"/>
</dbReference>
<dbReference type="PANTHER" id="PTHR10925:SF5">
    <property type="entry name" value="RNA CYTIDINE ACETYLTRANSFERASE"/>
    <property type="match status" value="1"/>
</dbReference>
<dbReference type="Pfam" id="PF13718">
    <property type="entry name" value="GNAT_acetyltr_2"/>
    <property type="match status" value="1"/>
</dbReference>
<dbReference type="Pfam" id="PF05127">
    <property type="entry name" value="NAT10_TcmA_helicase"/>
    <property type="match status" value="1"/>
</dbReference>
<dbReference type="Pfam" id="PF08351">
    <property type="entry name" value="TmcA_N"/>
    <property type="match status" value="1"/>
</dbReference>
<dbReference type="SUPFAM" id="SSF55729">
    <property type="entry name" value="Acyl-CoA N-acyltransferases (Nat)"/>
    <property type="match status" value="1"/>
</dbReference>
<dbReference type="SUPFAM" id="SSF52540">
    <property type="entry name" value="P-loop containing nucleoside triphosphate hydrolases"/>
    <property type="match status" value="1"/>
</dbReference>
<dbReference type="PROSITE" id="PS51186">
    <property type="entry name" value="GNAT"/>
    <property type="match status" value="1"/>
</dbReference>
<reference evidence="3" key="1">
    <citation type="journal article" date="1999" name="Genetics">
        <title>Divergence of the hyperthermophilic archaea Pyrococcus furiosus and P. horikoshii inferred from complete genomic sequences.</title>
        <authorList>
            <person name="Maeder D.L."/>
            <person name="Weiss R.B."/>
            <person name="Dunn D.M."/>
            <person name="Cherry J.L."/>
            <person name="Gonzalez J.M."/>
            <person name="DiRuggiero J."/>
            <person name="Robb F.T."/>
        </authorList>
    </citation>
    <scope>NUCLEOTIDE SEQUENCE [LARGE SCALE GENOMIC DNA]</scope>
    <source>
        <strain>ATCC 43587 / DSM 3638 / JCM 8422 / Vc1</strain>
    </source>
</reference>
<reference key="2">
    <citation type="journal article" date="2020" name="Nature">
        <title>Dynamic RNA acetylation revealed by quantitative cross-evolutionary mapping.</title>
        <authorList>
            <person name="Sas-Chen A."/>
            <person name="Thomas J.M."/>
            <person name="Matzov D."/>
            <person name="Taoka M."/>
            <person name="Nance K.D."/>
            <person name="Nir R."/>
            <person name="Bryson K.M."/>
            <person name="Shachar R."/>
            <person name="Liman G.L.S."/>
            <person name="Burkhart B.W."/>
            <person name="Gamage S.T."/>
            <person name="Nobe Y."/>
            <person name="Briney C.A."/>
            <person name="Levy M.J."/>
            <person name="Fuchs R.T."/>
            <person name="Robb G.B."/>
            <person name="Hartmann J."/>
            <person name="Sharma S."/>
            <person name="Lin Q."/>
            <person name="Florens L."/>
            <person name="Washburn M.P."/>
            <person name="Isobe T."/>
            <person name="Santangelo T.J."/>
            <person name="Shalev-Benami M."/>
            <person name="Meier J.L."/>
            <person name="Schwartz S."/>
        </authorList>
    </citation>
    <scope>FUNCTION</scope>
    <source>
        <strain>COM1</strain>
    </source>
</reference>
<comment type="function">
    <text evidence="1">Catalyzes the formation of N(4)-acetylcytidine (ac(4)C) at the wobble position of tRNA(Met), by using acetyl-CoA as an acetyl donor and ATP (or GTP).</text>
</comment>
<comment type="function">
    <text evidence="2">Catalyzes the formation of 233 N(4)-acetylcytidine (ac(4)C) sites in RNA, on the middle C of a CCG motif. Modifications are found in rRNA, ncRNA, mRNA and tRNA. More acetylation is observed at 85 than at 65 or 75 degrees Celsius.</text>
</comment>
<comment type="catalytic activity">
    <reaction evidence="1">
        <text>cytidine(34) in elongator tRNA(Met) + acetyl-CoA + ATP + H2O = N(4)-acetylcytidine(34) in elongator tRNA(Met) + ADP + phosphate + CoA + H(+)</text>
        <dbReference type="Rhea" id="RHEA:43788"/>
        <dbReference type="Rhea" id="RHEA-COMP:10693"/>
        <dbReference type="Rhea" id="RHEA-COMP:10694"/>
        <dbReference type="ChEBI" id="CHEBI:15377"/>
        <dbReference type="ChEBI" id="CHEBI:15378"/>
        <dbReference type="ChEBI" id="CHEBI:30616"/>
        <dbReference type="ChEBI" id="CHEBI:43474"/>
        <dbReference type="ChEBI" id="CHEBI:57287"/>
        <dbReference type="ChEBI" id="CHEBI:57288"/>
        <dbReference type="ChEBI" id="CHEBI:74900"/>
        <dbReference type="ChEBI" id="CHEBI:82748"/>
        <dbReference type="ChEBI" id="CHEBI:456216"/>
        <dbReference type="EC" id="2.3.1.193"/>
    </reaction>
</comment>
<comment type="catalytic activity">
    <reaction evidence="1 2">
        <text>a cytidine in RNA + acetyl-CoA + ATP + H2O = an N(4)-acetylcytidine in RNA + ADP + phosphate + CoA + H(+)</text>
        <dbReference type="Rhea" id="RHEA:82211"/>
        <dbReference type="Rhea" id="RHEA-COMP:15704"/>
        <dbReference type="Rhea" id="RHEA-COMP:19834"/>
        <dbReference type="ChEBI" id="CHEBI:15377"/>
        <dbReference type="ChEBI" id="CHEBI:15378"/>
        <dbReference type="ChEBI" id="CHEBI:30616"/>
        <dbReference type="ChEBI" id="CHEBI:43474"/>
        <dbReference type="ChEBI" id="CHEBI:57287"/>
        <dbReference type="ChEBI" id="CHEBI:57288"/>
        <dbReference type="ChEBI" id="CHEBI:74900"/>
        <dbReference type="ChEBI" id="CHEBI:82748"/>
        <dbReference type="ChEBI" id="CHEBI:456216"/>
    </reaction>
</comment>
<comment type="catalytic activity">
    <reaction evidence="1 2">
        <text>a cytidine in tRNA + acetyl-CoA + ATP + H2O = an N(4)-acetylcytidine in tRNA + ADP + phosphate + CoA + H(+)</text>
        <dbReference type="Rhea" id="RHEA:53876"/>
        <dbReference type="Rhea" id="RHEA-COMP:13670"/>
        <dbReference type="Rhea" id="RHEA-COMP:13671"/>
        <dbReference type="ChEBI" id="CHEBI:15377"/>
        <dbReference type="ChEBI" id="CHEBI:15378"/>
        <dbReference type="ChEBI" id="CHEBI:30616"/>
        <dbReference type="ChEBI" id="CHEBI:43474"/>
        <dbReference type="ChEBI" id="CHEBI:57287"/>
        <dbReference type="ChEBI" id="CHEBI:57288"/>
        <dbReference type="ChEBI" id="CHEBI:74900"/>
        <dbReference type="ChEBI" id="CHEBI:82748"/>
        <dbReference type="ChEBI" id="CHEBI:456216"/>
    </reaction>
</comment>
<comment type="catalytic activity">
    <reaction evidence="1 2">
        <text>a cytidine in mRNA + acetyl-CoA + ATP + H2O = an N(4)-acetylcytidine in mRNA + ADP + phosphate + CoA + H(+)</text>
        <dbReference type="Rhea" id="RHEA:58480"/>
        <dbReference type="Rhea" id="RHEA-COMP:15145"/>
        <dbReference type="Rhea" id="RHEA-COMP:15146"/>
        <dbReference type="ChEBI" id="CHEBI:15377"/>
        <dbReference type="ChEBI" id="CHEBI:15378"/>
        <dbReference type="ChEBI" id="CHEBI:30616"/>
        <dbReference type="ChEBI" id="CHEBI:43474"/>
        <dbReference type="ChEBI" id="CHEBI:57287"/>
        <dbReference type="ChEBI" id="CHEBI:57288"/>
        <dbReference type="ChEBI" id="CHEBI:74900"/>
        <dbReference type="ChEBI" id="CHEBI:82748"/>
        <dbReference type="ChEBI" id="CHEBI:456216"/>
    </reaction>
</comment>
<comment type="subcellular location">
    <subcellularLocation>
        <location evidence="1">Cytoplasm</location>
    </subcellularLocation>
</comment>
<comment type="similarity">
    <text evidence="1">Belongs to the TmcA family.</text>
</comment>
<feature type="chain" id="PRO_0000461792" description="tRNA(Met) cytidine acetyltransferase TmcA">
    <location>
        <begin position="1"/>
        <end position="816"/>
    </location>
</feature>
<feature type="domain" description="N-acetyltransferase" evidence="1">
    <location>
        <begin position="469"/>
        <end position="664"/>
    </location>
</feature>
<feature type="binding site" evidence="1">
    <location>
        <position position="265"/>
    </location>
    <ligand>
        <name>ATP</name>
        <dbReference type="ChEBI" id="CHEBI:30616"/>
    </ligand>
</feature>
<feature type="binding site" evidence="1">
    <location>
        <position position="439"/>
    </location>
    <ligand>
        <name>ATP</name>
        <dbReference type="ChEBI" id="CHEBI:30616"/>
    </ligand>
</feature>
<feature type="binding site" evidence="1">
    <location>
        <begin position="589"/>
        <end position="591"/>
    </location>
    <ligand>
        <name>acetyl-CoA</name>
        <dbReference type="ChEBI" id="CHEBI:57288"/>
    </ligand>
</feature>
<feature type="binding site" evidence="1">
    <location>
        <position position="629"/>
    </location>
    <ligand>
        <name>acetyl-CoA</name>
        <dbReference type="ChEBI" id="CHEBI:57288"/>
    </ligand>
</feature>
<feature type="binding site" evidence="1">
    <location>
        <position position="636"/>
    </location>
    <ligand>
        <name>acetyl-CoA</name>
        <dbReference type="ChEBI" id="CHEBI:57288"/>
    </ligand>
</feature>
<proteinExistence type="inferred from homology"/>
<organism>
    <name type="scientific">Pyrococcus furiosus (strain ATCC 43587 / DSM 3638 / JCM 8422 / Vc1)</name>
    <dbReference type="NCBI Taxonomy" id="186497"/>
    <lineage>
        <taxon>Archaea</taxon>
        <taxon>Methanobacteriati</taxon>
        <taxon>Methanobacteriota</taxon>
        <taxon>Thermococci</taxon>
        <taxon>Thermococcales</taxon>
        <taxon>Thermococcaceae</taxon>
        <taxon>Pyrococcus</taxon>
    </lineage>
</organism>
<sequence length="816" mass="94449">MTVKVKFPKDIREYARKEKVKDSLIKLTETALAEAISKFHRRMIVLQGDTLNKAKLAGILAGGAARILSEYIPEMLERKLRDTEQIEVLYATDALGEDTYGRKRFEEFRKHFSLLAPTAELTSVTFKHSRDILGRTFDILVIDLSYDYSPNDLGRIIETVRGGGLIFVLTNPFEKWKDMWTGFHKSLVTPPYTIEDVKKRFNRRLIRKFTEHKGIYIVNTDRMSIERKPGKYRSQATLPEREKVEIPKNIRFPRELYELCLTRGQVEVLKTLEELIEKEGMVVLTADRGRGKSVSIGIASVGLAVSSKKKRFRIVVTAPEPENVQSLMKFAKKSLEVLGYKTKVITDNGLIKEVYAKGIGIRYYPPTKGYRQRAELYIVDEAAGIHVPILHRYLEKERVVFSSTIHGYEGAGRGFSVKFLKKAKEKREYKEVHLSTPIRYAEGDPIEKWLFDVLLLDAEPVELTEEDYELIRKMEVYLEEPDLDDWFENDREDLRHFVGIYVLAHYRNRPSDVALLADAPHHEARVLRLKNGKIVTAIQIAKEGGIPKAVIDKMAKGYKPPGNIIPDMMVKHHYAKEFARLKGYRVVRIATHPDAMDMGLGSKALELLIKEAEEKGLDWVGSGFGASPELIRFWVRNGFAVVHLSPTRNPVSGEYTAIVIKPISEKAKEIVKKANEEFRIRLTEWLGDTHRDLEPEIARWLFESPFGEAVNYPIYLTKTQKRRLEMFIKRILTYDTVVDAVKPLVKLYFLDGWMRPYLDERQIMLLIHRVLQAHDWKETAKLLNRTEMYTMVELRDIVRGLWYYYKHLIKDEEGEK</sequence>